<protein>
    <recommendedName>
        <fullName evidence="1">Thymidylate kinase</fullName>
        <ecNumber evidence="1">2.7.4.9</ecNumber>
    </recommendedName>
    <alternativeName>
        <fullName evidence="1">dTMP kinase</fullName>
    </alternativeName>
</protein>
<comment type="function">
    <text evidence="1">Phosphorylation of dTMP to form dTDP in both de novo and salvage pathways of dTTP synthesis.</text>
</comment>
<comment type="catalytic activity">
    <reaction evidence="1">
        <text>dTMP + ATP = dTDP + ADP</text>
        <dbReference type="Rhea" id="RHEA:13517"/>
        <dbReference type="ChEBI" id="CHEBI:30616"/>
        <dbReference type="ChEBI" id="CHEBI:58369"/>
        <dbReference type="ChEBI" id="CHEBI:63528"/>
        <dbReference type="ChEBI" id="CHEBI:456216"/>
        <dbReference type="EC" id="2.7.4.9"/>
    </reaction>
</comment>
<comment type="similarity">
    <text evidence="1">Belongs to the thymidylate kinase family.</text>
</comment>
<gene>
    <name evidence="1" type="primary">tmk</name>
    <name type="ordered locus">STY1239</name>
    <name type="ordered locus">t1720</name>
</gene>
<organism>
    <name type="scientific">Salmonella typhi</name>
    <dbReference type="NCBI Taxonomy" id="90370"/>
    <lineage>
        <taxon>Bacteria</taxon>
        <taxon>Pseudomonadati</taxon>
        <taxon>Pseudomonadota</taxon>
        <taxon>Gammaproteobacteria</taxon>
        <taxon>Enterobacterales</taxon>
        <taxon>Enterobacteriaceae</taxon>
        <taxon>Salmonella</taxon>
    </lineage>
</organism>
<accession>P65247</accession>
<accession>Q8XGI1</accession>
<evidence type="ECO:0000255" key="1">
    <source>
        <dbReference type="HAMAP-Rule" id="MF_00165"/>
    </source>
</evidence>
<name>KTHY_SALTI</name>
<keyword id="KW-0067">ATP-binding</keyword>
<keyword id="KW-0418">Kinase</keyword>
<keyword id="KW-0545">Nucleotide biosynthesis</keyword>
<keyword id="KW-0547">Nucleotide-binding</keyword>
<keyword id="KW-0808">Transferase</keyword>
<feature type="chain" id="PRO_0000155335" description="Thymidylate kinase">
    <location>
        <begin position="1"/>
        <end position="213"/>
    </location>
</feature>
<feature type="binding site" evidence="1">
    <location>
        <begin position="10"/>
        <end position="17"/>
    </location>
    <ligand>
        <name>ATP</name>
        <dbReference type="ChEBI" id="CHEBI:30616"/>
    </ligand>
</feature>
<sequence length="213" mass="23724">MGSNYIVIEGLEGAGKTTARDVVVETLEQLGIRNMIFTREPGGTQLAEKLRSLVLDIRSVGDEVITDKAEVLMFYAARVQLVETVIKPALAQGVWVIGDRHDLSTQAYQGGGRGIDQTMLATLRDAVLGDFRPDLTLYLDVTPEVGLKRARARGDLDRIEQESFDFFNRTRARYLELAAQDSRIRTIDATQPLDAVMRDIRATVTKWVQEQAA</sequence>
<reference key="1">
    <citation type="journal article" date="2001" name="Nature">
        <title>Complete genome sequence of a multiple drug resistant Salmonella enterica serovar Typhi CT18.</title>
        <authorList>
            <person name="Parkhill J."/>
            <person name="Dougan G."/>
            <person name="James K.D."/>
            <person name="Thomson N.R."/>
            <person name="Pickard D."/>
            <person name="Wain J."/>
            <person name="Churcher C.M."/>
            <person name="Mungall K.L."/>
            <person name="Bentley S.D."/>
            <person name="Holden M.T.G."/>
            <person name="Sebaihia M."/>
            <person name="Baker S."/>
            <person name="Basham D."/>
            <person name="Brooks K."/>
            <person name="Chillingworth T."/>
            <person name="Connerton P."/>
            <person name="Cronin A."/>
            <person name="Davis P."/>
            <person name="Davies R.M."/>
            <person name="Dowd L."/>
            <person name="White N."/>
            <person name="Farrar J."/>
            <person name="Feltwell T."/>
            <person name="Hamlin N."/>
            <person name="Haque A."/>
            <person name="Hien T.T."/>
            <person name="Holroyd S."/>
            <person name="Jagels K."/>
            <person name="Krogh A."/>
            <person name="Larsen T.S."/>
            <person name="Leather S."/>
            <person name="Moule S."/>
            <person name="O'Gaora P."/>
            <person name="Parry C."/>
            <person name="Quail M.A."/>
            <person name="Rutherford K.M."/>
            <person name="Simmonds M."/>
            <person name="Skelton J."/>
            <person name="Stevens K."/>
            <person name="Whitehead S."/>
            <person name="Barrell B.G."/>
        </authorList>
    </citation>
    <scope>NUCLEOTIDE SEQUENCE [LARGE SCALE GENOMIC DNA]</scope>
    <source>
        <strain>CT18</strain>
    </source>
</reference>
<reference key="2">
    <citation type="journal article" date="2003" name="J. Bacteriol.">
        <title>Comparative genomics of Salmonella enterica serovar Typhi strains Ty2 and CT18.</title>
        <authorList>
            <person name="Deng W."/>
            <person name="Liou S.-R."/>
            <person name="Plunkett G. III"/>
            <person name="Mayhew G.F."/>
            <person name="Rose D.J."/>
            <person name="Burland V."/>
            <person name="Kodoyianni V."/>
            <person name="Schwartz D.C."/>
            <person name="Blattner F.R."/>
        </authorList>
    </citation>
    <scope>NUCLEOTIDE SEQUENCE [LARGE SCALE GENOMIC DNA]</scope>
    <source>
        <strain>ATCC 700931 / Ty2</strain>
    </source>
</reference>
<proteinExistence type="inferred from homology"/>
<dbReference type="EC" id="2.7.4.9" evidence="1"/>
<dbReference type="EMBL" id="AL513382">
    <property type="protein sequence ID" value="CAD08324.1"/>
    <property type="molecule type" value="Genomic_DNA"/>
</dbReference>
<dbReference type="EMBL" id="AE014613">
    <property type="protein sequence ID" value="AAO69344.1"/>
    <property type="molecule type" value="Genomic_DNA"/>
</dbReference>
<dbReference type="RefSeq" id="NP_455693.1">
    <property type="nucleotide sequence ID" value="NC_003198.1"/>
</dbReference>
<dbReference type="RefSeq" id="WP_000535399.1">
    <property type="nucleotide sequence ID" value="NZ_WSUR01000030.1"/>
</dbReference>
<dbReference type="SMR" id="P65247"/>
<dbReference type="STRING" id="220341.gene:17585204"/>
<dbReference type="KEGG" id="stt:t1720"/>
<dbReference type="KEGG" id="sty:STY1239"/>
<dbReference type="PATRIC" id="fig|220341.7.peg.1241"/>
<dbReference type="eggNOG" id="COG0125">
    <property type="taxonomic scope" value="Bacteria"/>
</dbReference>
<dbReference type="HOGENOM" id="CLU_049131_0_1_6"/>
<dbReference type="OMA" id="FLYTADH"/>
<dbReference type="OrthoDB" id="9774907at2"/>
<dbReference type="Proteomes" id="UP000000541">
    <property type="component" value="Chromosome"/>
</dbReference>
<dbReference type="Proteomes" id="UP000002670">
    <property type="component" value="Chromosome"/>
</dbReference>
<dbReference type="GO" id="GO:0005829">
    <property type="term" value="C:cytosol"/>
    <property type="evidence" value="ECO:0007669"/>
    <property type="project" value="TreeGrafter"/>
</dbReference>
<dbReference type="GO" id="GO:0005524">
    <property type="term" value="F:ATP binding"/>
    <property type="evidence" value="ECO:0007669"/>
    <property type="project" value="UniProtKB-UniRule"/>
</dbReference>
<dbReference type="GO" id="GO:0004798">
    <property type="term" value="F:dTMP kinase activity"/>
    <property type="evidence" value="ECO:0007669"/>
    <property type="project" value="UniProtKB-UniRule"/>
</dbReference>
<dbReference type="GO" id="GO:0006233">
    <property type="term" value="P:dTDP biosynthetic process"/>
    <property type="evidence" value="ECO:0007669"/>
    <property type="project" value="InterPro"/>
</dbReference>
<dbReference type="GO" id="GO:0006235">
    <property type="term" value="P:dTTP biosynthetic process"/>
    <property type="evidence" value="ECO:0007669"/>
    <property type="project" value="UniProtKB-UniRule"/>
</dbReference>
<dbReference type="GO" id="GO:0006227">
    <property type="term" value="P:dUDP biosynthetic process"/>
    <property type="evidence" value="ECO:0007669"/>
    <property type="project" value="TreeGrafter"/>
</dbReference>
<dbReference type="CDD" id="cd01672">
    <property type="entry name" value="TMPK"/>
    <property type="match status" value="1"/>
</dbReference>
<dbReference type="FunFam" id="3.40.50.300:FF:000321">
    <property type="entry name" value="Thymidylate kinase"/>
    <property type="match status" value="1"/>
</dbReference>
<dbReference type="Gene3D" id="3.40.50.300">
    <property type="entry name" value="P-loop containing nucleotide triphosphate hydrolases"/>
    <property type="match status" value="1"/>
</dbReference>
<dbReference type="HAMAP" id="MF_00165">
    <property type="entry name" value="Thymidylate_kinase"/>
    <property type="match status" value="1"/>
</dbReference>
<dbReference type="InterPro" id="IPR027417">
    <property type="entry name" value="P-loop_NTPase"/>
</dbReference>
<dbReference type="InterPro" id="IPR039430">
    <property type="entry name" value="Thymidylate_kin-like_dom"/>
</dbReference>
<dbReference type="InterPro" id="IPR018095">
    <property type="entry name" value="Thymidylate_kin_CS"/>
</dbReference>
<dbReference type="InterPro" id="IPR018094">
    <property type="entry name" value="Thymidylate_kinase"/>
</dbReference>
<dbReference type="NCBIfam" id="TIGR00041">
    <property type="entry name" value="DTMP_kinase"/>
    <property type="match status" value="1"/>
</dbReference>
<dbReference type="PANTHER" id="PTHR10344">
    <property type="entry name" value="THYMIDYLATE KINASE"/>
    <property type="match status" value="1"/>
</dbReference>
<dbReference type="PANTHER" id="PTHR10344:SF4">
    <property type="entry name" value="UMP-CMP KINASE 2, MITOCHONDRIAL"/>
    <property type="match status" value="1"/>
</dbReference>
<dbReference type="Pfam" id="PF02223">
    <property type="entry name" value="Thymidylate_kin"/>
    <property type="match status" value="1"/>
</dbReference>
<dbReference type="SUPFAM" id="SSF52540">
    <property type="entry name" value="P-loop containing nucleoside triphosphate hydrolases"/>
    <property type="match status" value="1"/>
</dbReference>
<dbReference type="PROSITE" id="PS01331">
    <property type="entry name" value="THYMIDYLATE_KINASE"/>
    <property type="match status" value="1"/>
</dbReference>